<dbReference type="EC" id="1.1.1.17" evidence="1"/>
<dbReference type="EMBL" id="AM933173">
    <property type="protein sequence ID" value="CAR39525.1"/>
    <property type="molecule type" value="Genomic_DNA"/>
</dbReference>
<dbReference type="RefSeq" id="WP_000645377.1">
    <property type="nucleotide sequence ID" value="NC_011274.1"/>
</dbReference>
<dbReference type="SMR" id="B5RGJ1"/>
<dbReference type="KEGG" id="seg:SG3744"/>
<dbReference type="HOGENOM" id="CLU_036089_2_0_6"/>
<dbReference type="Proteomes" id="UP000008321">
    <property type="component" value="Chromosome"/>
</dbReference>
<dbReference type="GO" id="GO:0005829">
    <property type="term" value="C:cytosol"/>
    <property type="evidence" value="ECO:0007669"/>
    <property type="project" value="TreeGrafter"/>
</dbReference>
<dbReference type="GO" id="GO:0008926">
    <property type="term" value="F:mannitol-1-phosphate 5-dehydrogenase activity"/>
    <property type="evidence" value="ECO:0007669"/>
    <property type="project" value="UniProtKB-UniRule"/>
</dbReference>
<dbReference type="GO" id="GO:0019592">
    <property type="term" value="P:mannitol catabolic process"/>
    <property type="evidence" value="ECO:0007669"/>
    <property type="project" value="TreeGrafter"/>
</dbReference>
<dbReference type="FunFam" id="1.10.1040.10:FF:000009">
    <property type="entry name" value="Mannitol-1-phosphate 5-dehydrogenase"/>
    <property type="match status" value="1"/>
</dbReference>
<dbReference type="FunFam" id="3.40.50.720:FF:000075">
    <property type="entry name" value="Mannitol-1-phosphate 5-dehydrogenase"/>
    <property type="match status" value="1"/>
</dbReference>
<dbReference type="Gene3D" id="1.10.1040.10">
    <property type="entry name" value="N-(1-d-carboxylethyl)-l-norvaline Dehydrogenase, domain 2"/>
    <property type="match status" value="1"/>
</dbReference>
<dbReference type="Gene3D" id="3.40.50.720">
    <property type="entry name" value="NAD(P)-binding Rossmann-like Domain"/>
    <property type="match status" value="1"/>
</dbReference>
<dbReference type="HAMAP" id="MF_00196">
    <property type="entry name" value="Mannitol_dehydrog"/>
    <property type="match status" value="1"/>
</dbReference>
<dbReference type="InterPro" id="IPR008927">
    <property type="entry name" value="6-PGluconate_DH-like_C_sf"/>
</dbReference>
<dbReference type="InterPro" id="IPR013328">
    <property type="entry name" value="6PGD_dom2"/>
</dbReference>
<dbReference type="InterPro" id="IPR023028">
    <property type="entry name" value="Mannitol_1_phos_5_DH"/>
</dbReference>
<dbReference type="InterPro" id="IPR000669">
    <property type="entry name" value="Mannitol_DH"/>
</dbReference>
<dbReference type="InterPro" id="IPR013118">
    <property type="entry name" value="Mannitol_DH_C"/>
</dbReference>
<dbReference type="InterPro" id="IPR023027">
    <property type="entry name" value="Mannitol_DH_CS"/>
</dbReference>
<dbReference type="InterPro" id="IPR013131">
    <property type="entry name" value="Mannitol_DH_N"/>
</dbReference>
<dbReference type="InterPro" id="IPR036291">
    <property type="entry name" value="NAD(P)-bd_dom_sf"/>
</dbReference>
<dbReference type="NCBIfam" id="NF002646">
    <property type="entry name" value="PRK02318.1-2"/>
    <property type="match status" value="1"/>
</dbReference>
<dbReference type="NCBIfam" id="NF002647">
    <property type="entry name" value="PRK02318.1-3"/>
    <property type="match status" value="1"/>
</dbReference>
<dbReference type="NCBIfam" id="NF002648">
    <property type="entry name" value="PRK02318.1-4"/>
    <property type="match status" value="1"/>
</dbReference>
<dbReference type="NCBIfam" id="NF002650">
    <property type="entry name" value="PRK02318.2-2"/>
    <property type="match status" value="1"/>
</dbReference>
<dbReference type="NCBIfam" id="NF002652">
    <property type="entry name" value="PRK02318.2-5"/>
    <property type="match status" value="1"/>
</dbReference>
<dbReference type="PANTHER" id="PTHR30524:SF0">
    <property type="entry name" value="ALTRONATE OXIDOREDUCTASE-RELATED"/>
    <property type="match status" value="1"/>
</dbReference>
<dbReference type="PANTHER" id="PTHR30524">
    <property type="entry name" value="MANNITOL-1-PHOSPHATE 5-DEHYDROGENASE"/>
    <property type="match status" value="1"/>
</dbReference>
<dbReference type="Pfam" id="PF01232">
    <property type="entry name" value="Mannitol_dh"/>
    <property type="match status" value="1"/>
</dbReference>
<dbReference type="Pfam" id="PF08125">
    <property type="entry name" value="Mannitol_dh_C"/>
    <property type="match status" value="1"/>
</dbReference>
<dbReference type="PRINTS" id="PR00084">
    <property type="entry name" value="MTLDHDRGNASE"/>
</dbReference>
<dbReference type="SUPFAM" id="SSF48179">
    <property type="entry name" value="6-phosphogluconate dehydrogenase C-terminal domain-like"/>
    <property type="match status" value="1"/>
</dbReference>
<dbReference type="SUPFAM" id="SSF51735">
    <property type="entry name" value="NAD(P)-binding Rossmann-fold domains"/>
    <property type="match status" value="1"/>
</dbReference>
<dbReference type="PROSITE" id="PS00974">
    <property type="entry name" value="MANNITOL_DHGENASE"/>
    <property type="match status" value="1"/>
</dbReference>
<keyword id="KW-0520">NAD</keyword>
<keyword id="KW-0560">Oxidoreductase</keyword>
<proteinExistence type="inferred from homology"/>
<reference key="1">
    <citation type="journal article" date="2008" name="Genome Res.">
        <title>Comparative genome analysis of Salmonella enteritidis PT4 and Salmonella gallinarum 287/91 provides insights into evolutionary and host adaptation pathways.</title>
        <authorList>
            <person name="Thomson N.R."/>
            <person name="Clayton D.J."/>
            <person name="Windhorst D."/>
            <person name="Vernikos G."/>
            <person name="Davidson S."/>
            <person name="Churcher C."/>
            <person name="Quail M.A."/>
            <person name="Stevens M."/>
            <person name="Jones M.A."/>
            <person name="Watson M."/>
            <person name="Barron A."/>
            <person name="Layton A."/>
            <person name="Pickard D."/>
            <person name="Kingsley R.A."/>
            <person name="Bignell A."/>
            <person name="Clark L."/>
            <person name="Harris B."/>
            <person name="Ormond D."/>
            <person name="Abdellah Z."/>
            <person name="Brooks K."/>
            <person name="Cherevach I."/>
            <person name="Chillingworth T."/>
            <person name="Woodward J."/>
            <person name="Norberczak H."/>
            <person name="Lord A."/>
            <person name="Arrowsmith C."/>
            <person name="Jagels K."/>
            <person name="Moule S."/>
            <person name="Mungall K."/>
            <person name="Saunders M."/>
            <person name="Whitehead S."/>
            <person name="Chabalgoity J.A."/>
            <person name="Maskell D."/>
            <person name="Humphreys T."/>
            <person name="Roberts M."/>
            <person name="Barrow P.A."/>
            <person name="Dougan G."/>
            <person name="Parkhill J."/>
        </authorList>
    </citation>
    <scope>NUCLEOTIDE SEQUENCE [LARGE SCALE GENOMIC DNA]</scope>
    <source>
        <strain>287/91 / NCTC 13346</strain>
    </source>
</reference>
<gene>
    <name evidence="1" type="primary">mtlD</name>
    <name type="ordered locus">SG3744</name>
</gene>
<protein>
    <recommendedName>
        <fullName evidence="1">Mannitol-1-phosphate 5-dehydrogenase</fullName>
        <ecNumber evidence="1">1.1.1.17</ecNumber>
    </recommendedName>
</protein>
<evidence type="ECO:0000255" key="1">
    <source>
        <dbReference type="HAMAP-Rule" id="MF_00196"/>
    </source>
</evidence>
<feature type="chain" id="PRO_1000099198" description="Mannitol-1-phosphate 5-dehydrogenase">
    <location>
        <begin position="1"/>
        <end position="382"/>
    </location>
</feature>
<feature type="binding site" evidence="1">
    <location>
        <begin position="3"/>
        <end position="14"/>
    </location>
    <ligand>
        <name>NAD(+)</name>
        <dbReference type="ChEBI" id="CHEBI:57540"/>
    </ligand>
</feature>
<name>MTLD_SALG2</name>
<comment type="catalytic activity">
    <reaction evidence="1">
        <text>D-mannitol 1-phosphate + NAD(+) = beta-D-fructose 6-phosphate + NADH + H(+)</text>
        <dbReference type="Rhea" id="RHEA:19661"/>
        <dbReference type="ChEBI" id="CHEBI:15378"/>
        <dbReference type="ChEBI" id="CHEBI:57540"/>
        <dbReference type="ChEBI" id="CHEBI:57634"/>
        <dbReference type="ChEBI" id="CHEBI:57945"/>
        <dbReference type="ChEBI" id="CHEBI:61381"/>
        <dbReference type="EC" id="1.1.1.17"/>
    </reaction>
</comment>
<comment type="similarity">
    <text evidence="1">Belongs to the mannitol dehydrogenase family.</text>
</comment>
<accession>B5RGJ1</accession>
<organism>
    <name type="scientific">Salmonella gallinarum (strain 287/91 / NCTC 13346)</name>
    <dbReference type="NCBI Taxonomy" id="550538"/>
    <lineage>
        <taxon>Bacteria</taxon>
        <taxon>Pseudomonadati</taxon>
        <taxon>Pseudomonadota</taxon>
        <taxon>Gammaproteobacteria</taxon>
        <taxon>Enterobacterales</taxon>
        <taxon>Enterobacteriaceae</taxon>
        <taxon>Salmonella</taxon>
    </lineage>
</organism>
<sequence>MKALHFGAGNIGRGFIGKLLADAGIQLTFADVNQVVLDALNARHSYQVHVVGENEQVDTVSGVNAVSSIGDDVVDLIAHVDLITTAVGPVVLERIAPAIAKGLAKRKAQGVDAPLNIIACENMVRGTTQLKGHVMNALADGDKAWVEQHVGFVDSAVDRIVPPSASATHDPLEVTVETFSEWIVDKTQFKGALPNIPGMELTDNLMAFVERKLFTLNTGHAITAYLGKLAGHQTIRDAILDESIRAVVKGAMEESGAVLIKRYGFDADKHAAYIQKILGRFENPYLKDDVERVGRQPLRKLSAGDRLIKPLLGTLEYGLPHVNLVKGIAAAMHFRSDEDPQAQELAALITEKGPQAALAQISGLDANSDVVAEAVNAYNATK</sequence>